<name>GCSPA_RHOCS</name>
<keyword id="KW-0560">Oxidoreductase</keyword>
<keyword id="KW-1185">Reference proteome</keyword>
<gene>
    <name evidence="1" type="primary">gcvPA</name>
    <name type="ordered locus">RC1_3658</name>
</gene>
<proteinExistence type="inferred from homology"/>
<sequence length="449" mass="47725">MRYLPLTEADRQAMLARIGVPDVDALFRDVPQAARLTAPIDGLPLHMGELEVDRLLSGMAAKNLTAGSVPSFLGAGAYRHHVPASVDQMLLRGEFLTSYTPYQPEVAQGTLQYLFEFQTQVAEITGMEVANASMYDGATGTAEAVLMATRLTRRSKAVLSGGLHPHYREVVATTCGVLGMEVAAQAPDPTDAEDLLPLVDDATACVVVQTPSLFGHPRDLSELAAACHAKGALLIAVVTEVVSLGLLTPPGRMGADIVVCEGQSIGNPLNFGGPHVGLFATREKFVRQMPGRLCGQTADAEGKRGFVLTLSTREQHIRREKATSNICTNSGLCALAFTIHMALLGGEGFARLARLNHAKAVTLADRLAAVPGVEVLNGAFFNEFTLRLPRPAAPVVEALAQRRILAGVPVSRLYPGEAGLETLLLVAATETNTEADMDALVHGLQEVLR</sequence>
<dbReference type="EC" id="1.4.4.2" evidence="1"/>
<dbReference type="EMBL" id="CP000613">
    <property type="protein sequence ID" value="ACJ01007.1"/>
    <property type="molecule type" value="Genomic_DNA"/>
</dbReference>
<dbReference type="RefSeq" id="WP_012568783.1">
    <property type="nucleotide sequence ID" value="NC_011420.2"/>
</dbReference>
<dbReference type="SMR" id="B6IXI3"/>
<dbReference type="STRING" id="414684.RC1_3658"/>
<dbReference type="KEGG" id="rce:RC1_3658"/>
<dbReference type="eggNOG" id="COG0403">
    <property type="taxonomic scope" value="Bacteria"/>
</dbReference>
<dbReference type="HOGENOM" id="CLU_004620_0_2_5"/>
<dbReference type="OrthoDB" id="9801272at2"/>
<dbReference type="Proteomes" id="UP000001591">
    <property type="component" value="Chromosome"/>
</dbReference>
<dbReference type="GO" id="GO:0004375">
    <property type="term" value="F:glycine dehydrogenase (decarboxylating) activity"/>
    <property type="evidence" value="ECO:0007669"/>
    <property type="project" value="UniProtKB-EC"/>
</dbReference>
<dbReference type="GO" id="GO:0019464">
    <property type="term" value="P:glycine decarboxylation via glycine cleavage system"/>
    <property type="evidence" value="ECO:0007669"/>
    <property type="project" value="UniProtKB-UniRule"/>
</dbReference>
<dbReference type="GO" id="GO:0009116">
    <property type="term" value="P:nucleoside metabolic process"/>
    <property type="evidence" value="ECO:0007669"/>
    <property type="project" value="InterPro"/>
</dbReference>
<dbReference type="CDD" id="cd00613">
    <property type="entry name" value="GDC-P"/>
    <property type="match status" value="1"/>
</dbReference>
<dbReference type="Gene3D" id="3.90.1150.10">
    <property type="entry name" value="Aspartate Aminotransferase, domain 1"/>
    <property type="match status" value="1"/>
</dbReference>
<dbReference type="Gene3D" id="3.40.640.10">
    <property type="entry name" value="Type I PLP-dependent aspartate aminotransferase-like (Major domain)"/>
    <property type="match status" value="1"/>
</dbReference>
<dbReference type="HAMAP" id="MF_00712">
    <property type="entry name" value="GcvPA"/>
    <property type="match status" value="1"/>
</dbReference>
<dbReference type="InterPro" id="IPR023010">
    <property type="entry name" value="GcvPA"/>
</dbReference>
<dbReference type="InterPro" id="IPR049315">
    <property type="entry name" value="GDC-P_N"/>
</dbReference>
<dbReference type="InterPro" id="IPR020581">
    <property type="entry name" value="GDC_P"/>
</dbReference>
<dbReference type="InterPro" id="IPR015424">
    <property type="entry name" value="PyrdxlP-dep_Trfase"/>
</dbReference>
<dbReference type="InterPro" id="IPR015421">
    <property type="entry name" value="PyrdxlP-dep_Trfase_major"/>
</dbReference>
<dbReference type="InterPro" id="IPR015422">
    <property type="entry name" value="PyrdxlP-dep_Trfase_small"/>
</dbReference>
<dbReference type="NCBIfam" id="NF001696">
    <property type="entry name" value="PRK00451.1"/>
    <property type="match status" value="1"/>
</dbReference>
<dbReference type="PANTHER" id="PTHR42806">
    <property type="entry name" value="GLYCINE CLEAVAGE SYSTEM P-PROTEIN"/>
    <property type="match status" value="1"/>
</dbReference>
<dbReference type="PANTHER" id="PTHR42806:SF1">
    <property type="entry name" value="GLYCINE DEHYDROGENASE (DECARBOXYLATING)"/>
    <property type="match status" value="1"/>
</dbReference>
<dbReference type="Pfam" id="PF02347">
    <property type="entry name" value="GDC-P"/>
    <property type="match status" value="1"/>
</dbReference>
<dbReference type="PIRSF" id="PIRSF006815">
    <property type="entry name" value="GcvPA"/>
    <property type="match status" value="1"/>
</dbReference>
<dbReference type="SUPFAM" id="SSF53383">
    <property type="entry name" value="PLP-dependent transferases"/>
    <property type="match status" value="1"/>
</dbReference>
<accession>B6IXI3</accession>
<organism>
    <name type="scientific">Rhodospirillum centenum (strain ATCC 51521 / SW)</name>
    <dbReference type="NCBI Taxonomy" id="414684"/>
    <lineage>
        <taxon>Bacteria</taxon>
        <taxon>Pseudomonadati</taxon>
        <taxon>Pseudomonadota</taxon>
        <taxon>Alphaproteobacteria</taxon>
        <taxon>Rhodospirillales</taxon>
        <taxon>Rhodospirillaceae</taxon>
        <taxon>Rhodospirillum</taxon>
    </lineage>
</organism>
<protein>
    <recommendedName>
        <fullName evidence="1">Probable glycine dehydrogenase (decarboxylating) subunit 1</fullName>
        <ecNumber evidence="1">1.4.4.2</ecNumber>
    </recommendedName>
    <alternativeName>
        <fullName evidence="1">Glycine cleavage system P-protein subunit 1</fullName>
    </alternativeName>
    <alternativeName>
        <fullName evidence="1">Glycine decarboxylase subunit 1</fullName>
    </alternativeName>
    <alternativeName>
        <fullName evidence="1">Glycine dehydrogenase (aminomethyl-transferring) subunit 1</fullName>
    </alternativeName>
</protein>
<evidence type="ECO:0000255" key="1">
    <source>
        <dbReference type="HAMAP-Rule" id="MF_00712"/>
    </source>
</evidence>
<comment type="function">
    <text evidence="1">The glycine cleavage system catalyzes the degradation of glycine. The P protein binds the alpha-amino group of glycine through its pyridoxal phosphate cofactor; CO(2) is released and the remaining methylamine moiety is then transferred to the lipoamide cofactor of the H protein.</text>
</comment>
<comment type="catalytic activity">
    <reaction evidence="1">
        <text>N(6)-[(R)-lipoyl]-L-lysyl-[glycine-cleavage complex H protein] + glycine + H(+) = N(6)-[(R)-S(8)-aminomethyldihydrolipoyl]-L-lysyl-[glycine-cleavage complex H protein] + CO2</text>
        <dbReference type="Rhea" id="RHEA:24304"/>
        <dbReference type="Rhea" id="RHEA-COMP:10494"/>
        <dbReference type="Rhea" id="RHEA-COMP:10495"/>
        <dbReference type="ChEBI" id="CHEBI:15378"/>
        <dbReference type="ChEBI" id="CHEBI:16526"/>
        <dbReference type="ChEBI" id="CHEBI:57305"/>
        <dbReference type="ChEBI" id="CHEBI:83099"/>
        <dbReference type="ChEBI" id="CHEBI:83143"/>
        <dbReference type="EC" id="1.4.4.2"/>
    </reaction>
</comment>
<comment type="subunit">
    <text evidence="1">The glycine cleavage system is composed of four proteins: P, T, L and H. In this organism, the P 'protein' is a heterodimer of two subunits.</text>
</comment>
<comment type="similarity">
    <text evidence="1">Belongs to the GcvP family. N-terminal subunit subfamily.</text>
</comment>
<reference key="1">
    <citation type="submission" date="2007-03" db="EMBL/GenBank/DDBJ databases">
        <title>Genome sequence of Rhodospirillum centenum.</title>
        <authorList>
            <person name="Touchman J.W."/>
            <person name="Bauer C."/>
            <person name="Blankenship R.E."/>
        </authorList>
    </citation>
    <scope>NUCLEOTIDE SEQUENCE [LARGE SCALE GENOMIC DNA]</scope>
    <source>
        <strain>ATCC 51521 / SW</strain>
    </source>
</reference>
<feature type="chain" id="PRO_1000132487" description="Probable glycine dehydrogenase (decarboxylating) subunit 1">
    <location>
        <begin position="1"/>
        <end position="449"/>
    </location>
</feature>